<organism>
    <name type="scientific">Chlamydia trachomatis serovar D (strain ATCC VR-885 / DSM 19411 / UW-3/Cx)</name>
    <dbReference type="NCBI Taxonomy" id="272561"/>
    <lineage>
        <taxon>Bacteria</taxon>
        <taxon>Pseudomonadati</taxon>
        <taxon>Chlamydiota</taxon>
        <taxon>Chlamydiia</taxon>
        <taxon>Chlamydiales</taxon>
        <taxon>Chlamydiaceae</taxon>
        <taxon>Chlamydia/Chlamydophila group</taxon>
        <taxon>Chlamydia</taxon>
    </lineage>
</organism>
<protein>
    <recommendedName>
        <fullName evidence="1">Replication restart protein PriA</fullName>
    </recommendedName>
    <alternativeName>
        <fullName evidence="1">ATP-dependent DNA helicase PriA</fullName>
        <ecNumber evidence="1">5.6.2.4</ecNumber>
    </alternativeName>
    <alternativeName>
        <fullName evidence="1">DNA 3'-5' helicase PriA</fullName>
    </alternativeName>
</protein>
<proteinExistence type="inferred from homology"/>
<keyword id="KW-0067">ATP-binding</keyword>
<keyword id="KW-0235">DNA replication</keyword>
<keyword id="KW-0238">DNA-binding</keyword>
<keyword id="KW-0347">Helicase</keyword>
<keyword id="KW-0378">Hydrolase</keyword>
<keyword id="KW-0413">Isomerase</keyword>
<keyword id="KW-0479">Metal-binding</keyword>
<keyword id="KW-0547">Nucleotide-binding</keyword>
<keyword id="KW-0639">Primosome</keyword>
<keyword id="KW-1185">Reference proteome</keyword>
<keyword id="KW-0862">Zinc</keyword>
<comment type="function">
    <text evidence="1">Initiates the restart of stalled replication forks, which reloads the replicative helicase on sites other than the origin of replication. Recognizes and binds to abandoned replication forks and remodels them to uncover a helicase loading site. Promotes assembly of the primosome at these replication forks.</text>
</comment>
<comment type="catalytic activity">
    <reaction evidence="1">
        <text>Couples ATP hydrolysis with the unwinding of duplex DNA by translocating in the 3'-5' direction.</text>
        <dbReference type="EC" id="5.6.2.4"/>
    </reaction>
</comment>
<comment type="catalytic activity">
    <reaction evidence="1">
        <text>ATP + H2O = ADP + phosphate + H(+)</text>
        <dbReference type="Rhea" id="RHEA:13065"/>
        <dbReference type="ChEBI" id="CHEBI:15377"/>
        <dbReference type="ChEBI" id="CHEBI:15378"/>
        <dbReference type="ChEBI" id="CHEBI:30616"/>
        <dbReference type="ChEBI" id="CHEBI:43474"/>
        <dbReference type="ChEBI" id="CHEBI:456216"/>
        <dbReference type="EC" id="5.6.2.4"/>
    </reaction>
</comment>
<comment type="cofactor">
    <cofactor evidence="1">
        <name>Zn(2+)</name>
        <dbReference type="ChEBI" id="CHEBI:29105"/>
    </cofactor>
    <text evidence="1">Binds 2 zinc ions per subunit.</text>
</comment>
<comment type="subunit">
    <text evidence="1">Component of the replication restart primosome.</text>
</comment>
<comment type="similarity">
    <text evidence="1">Belongs to the helicase family. PriA subfamily.</text>
</comment>
<reference key="1">
    <citation type="journal article" date="1998" name="Science">
        <title>Genome sequence of an obligate intracellular pathogen of humans: Chlamydia trachomatis.</title>
        <authorList>
            <person name="Stephens R.S."/>
            <person name="Kalman S."/>
            <person name="Lammel C.J."/>
            <person name="Fan J."/>
            <person name="Marathe R."/>
            <person name="Aravind L."/>
            <person name="Mitchell W.P."/>
            <person name="Olinger L."/>
            <person name="Tatusov R.L."/>
            <person name="Zhao Q."/>
            <person name="Koonin E.V."/>
            <person name="Davis R.W."/>
        </authorList>
    </citation>
    <scope>NUCLEOTIDE SEQUENCE [LARGE SCALE GENOMIC DNA]</scope>
    <source>
        <strain>ATCC VR-885 / DSM 19411 / UW-3/Cx</strain>
    </source>
</reference>
<dbReference type="EC" id="5.6.2.4" evidence="1"/>
<dbReference type="EMBL" id="AE001273">
    <property type="protein sequence ID" value="AAC68373.1"/>
    <property type="molecule type" value="Genomic_DNA"/>
</dbReference>
<dbReference type="PIR" id="B71472">
    <property type="entry name" value="B71472"/>
</dbReference>
<dbReference type="RefSeq" id="NP_220297.1">
    <property type="nucleotide sequence ID" value="NC_000117.1"/>
</dbReference>
<dbReference type="RefSeq" id="WP_010725341.1">
    <property type="nucleotide sequence ID" value="NC_000117.1"/>
</dbReference>
<dbReference type="SMR" id="O84783"/>
<dbReference type="FunCoup" id="O84783">
    <property type="interactions" value="222"/>
</dbReference>
<dbReference type="STRING" id="272561.CT_778"/>
<dbReference type="EnsemblBacteria" id="AAC68373">
    <property type="protein sequence ID" value="AAC68373"/>
    <property type="gene ID" value="CT_778"/>
</dbReference>
<dbReference type="GeneID" id="884574"/>
<dbReference type="KEGG" id="ctr:CT_778"/>
<dbReference type="PATRIC" id="fig|272561.5.peg.854"/>
<dbReference type="HOGENOM" id="CLU_013353_3_1_0"/>
<dbReference type="InParanoid" id="O84783"/>
<dbReference type="OrthoDB" id="9759544at2"/>
<dbReference type="Proteomes" id="UP000000431">
    <property type="component" value="Chromosome"/>
</dbReference>
<dbReference type="GO" id="GO:1990077">
    <property type="term" value="C:primosome complex"/>
    <property type="evidence" value="ECO:0007669"/>
    <property type="project" value="UniProtKB-UniRule"/>
</dbReference>
<dbReference type="GO" id="GO:0043138">
    <property type="term" value="F:3'-5' DNA helicase activity"/>
    <property type="evidence" value="ECO:0000318"/>
    <property type="project" value="GO_Central"/>
</dbReference>
<dbReference type="GO" id="GO:0005524">
    <property type="term" value="F:ATP binding"/>
    <property type="evidence" value="ECO:0007669"/>
    <property type="project" value="UniProtKB-UniRule"/>
</dbReference>
<dbReference type="GO" id="GO:0016887">
    <property type="term" value="F:ATP hydrolysis activity"/>
    <property type="evidence" value="ECO:0007669"/>
    <property type="project" value="RHEA"/>
</dbReference>
<dbReference type="GO" id="GO:0003677">
    <property type="term" value="F:DNA binding"/>
    <property type="evidence" value="ECO:0007669"/>
    <property type="project" value="UniProtKB-UniRule"/>
</dbReference>
<dbReference type="GO" id="GO:0008270">
    <property type="term" value="F:zinc ion binding"/>
    <property type="evidence" value="ECO:0007669"/>
    <property type="project" value="UniProtKB-UniRule"/>
</dbReference>
<dbReference type="GO" id="GO:0006310">
    <property type="term" value="P:DNA recombination"/>
    <property type="evidence" value="ECO:0000318"/>
    <property type="project" value="GO_Central"/>
</dbReference>
<dbReference type="GO" id="GO:0006260">
    <property type="term" value="P:DNA replication"/>
    <property type="evidence" value="ECO:0000318"/>
    <property type="project" value="GO_Central"/>
</dbReference>
<dbReference type="GO" id="GO:0006270">
    <property type="term" value="P:DNA replication initiation"/>
    <property type="evidence" value="ECO:0000318"/>
    <property type="project" value="GO_Central"/>
</dbReference>
<dbReference type="GO" id="GO:0006269">
    <property type="term" value="P:DNA replication, synthesis of primer"/>
    <property type="evidence" value="ECO:0007669"/>
    <property type="project" value="UniProtKB-KW"/>
</dbReference>
<dbReference type="GO" id="GO:0006302">
    <property type="term" value="P:double-strand break repair"/>
    <property type="evidence" value="ECO:0000318"/>
    <property type="project" value="GO_Central"/>
</dbReference>
<dbReference type="CDD" id="cd17929">
    <property type="entry name" value="DEXHc_priA"/>
    <property type="match status" value="1"/>
</dbReference>
<dbReference type="CDD" id="cd18804">
    <property type="entry name" value="SF2_C_priA"/>
    <property type="match status" value="1"/>
</dbReference>
<dbReference type="FunFam" id="3.40.50.300:FF:000489">
    <property type="entry name" value="Primosome assembly protein PriA"/>
    <property type="match status" value="1"/>
</dbReference>
<dbReference type="Gene3D" id="3.40.50.300">
    <property type="entry name" value="P-loop containing nucleotide triphosphate hydrolases"/>
    <property type="match status" value="2"/>
</dbReference>
<dbReference type="Gene3D" id="3.40.1440.60">
    <property type="entry name" value="PriA, 3(prime) DNA-binding domain"/>
    <property type="match status" value="1"/>
</dbReference>
<dbReference type="HAMAP" id="MF_00983">
    <property type="entry name" value="PriA"/>
    <property type="match status" value="1"/>
</dbReference>
<dbReference type="InterPro" id="IPR011545">
    <property type="entry name" value="DEAD/DEAH_box_helicase_dom"/>
</dbReference>
<dbReference type="InterPro" id="IPR014001">
    <property type="entry name" value="Helicase_ATP-bd"/>
</dbReference>
<dbReference type="InterPro" id="IPR001650">
    <property type="entry name" value="Helicase_C-like"/>
</dbReference>
<dbReference type="InterPro" id="IPR027417">
    <property type="entry name" value="P-loop_NTPase"/>
</dbReference>
<dbReference type="InterPro" id="IPR005259">
    <property type="entry name" value="PriA"/>
</dbReference>
<dbReference type="InterPro" id="IPR041222">
    <property type="entry name" value="PriA_3primeBD"/>
</dbReference>
<dbReference type="InterPro" id="IPR042115">
    <property type="entry name" value="PriA_3primeBD_sf"/>
</dbReference>
<dbReference type="InterPro" id="IPR041236">
    <property type="entry name" value="PriA_C"/>
</dbReference>
<dbReference type="InterPro" id="IPR040498">
    <property type="entry name" value="PriA_CRR"/>
</dbReference>
<dbReference type="InterPro" id="IPR050880">
    <property type="entry name" value="PriA_helicase"/>
</dbReference>
<dbReference type="NCBIfam" id="TIGR00595">
    <property type="entry name" value="priA"/>
    <property type="match status" value="1"/>
</dbReference>
<dbReference type="NCBIfam" id="NF004066">
    <property type="entry name" value="PRK05580.1-3"/>
    <property type="match status" value="1"/>
</dbReference>
<dbReference type="PANTHER" id="PTHR30580">
    <property type="entry name" value="PRIMOSOMAL PROTEIN N"/>
    <property type="match status" value="1"/>
</dbReference>
<dbReference type="PANTHER" id="PTHR30580:SF0">
    <property type="entry name" value="PRIMOSOMAL PROTEIN N"/>
    <property type="match status" value="1"/>
</dbReference>
<dbReference type="Pfam" id="PF00270">
    <property type="entry name" value="DEAD"/>
    <property type="match status" value="1"/>
</dbReference>
<dbReference type="Pfam" id="PF17764">
    <property type="entry name" value="PriA_3primeBD"/>
    <property type="match status" value="1"/>
</dbReference>
<dbReference type="Pfam" id="PF18074">
    <property type="entry name" value="PriA_C"/>
    <property type="match status" value="1"/>
</dbReference>
<dbReference type="Pfam" id="PF18319">
    <property type="entry name" value="Zn_ribbon_PriA"/>
    <property type="match status" value="1"/>
</dbReference>
<dbReference type="SMART" id="SM00487">
    <property type="entry name" value="DEXDc"/>
    <property type="match status" value="1"/>
</dbReference>
<dbReference type="SMART" id="SM00490">
    <property type="entry name" value="HELICc"/>
    <property type="match status" value="1"/>
</dbReference>
<dbReference type="SUPFAM" id="SSF52540">
    <property type="entry name" value="P-loop containing nucleoside triphosphate hydrolases"/>
    <property type="match status" value="2"/>
</dbReference>
<dbReference type="PROSITE" id="PS51192">
    <property type="entry name" value="HELICASE_ATP_BIND_1"/>
    <property type="match status" value="1"/>
</dbReference>
<dbReference type="PROSITE" id="PS51194">
    <property type="entry name" value="HELICASE_CTER"/>
    <property type="match status" value="1"/>
</dbReference>
<name>PRIA_CHLTR</name>
<accession>O84783</accession>
<feature type="chain" id="PRO_0000102122" description="Replication restart protein PriA">
    <location>
        <begin position="1"/>
        <end position="753"/>
    </location>
</feature>
<feature type="domain" description="Helicase ATP-binding" evidence="1">
    <location>
        <begin position="228"/>
        <end position="395"/>
    </location>
</feature>
<feature type="domain" description="Helicase C-terminal" evidence="1">
    <location>
        <begin position="491"/>
        <end position="646"/>
    </location>
</feature>
<feature type="short sequence motif" description="DEAH box" evidence="1">
    <location>
        <begin position="337"/>
        <end position="340"/>
    </location>
</feature>
<feature type="binding site" evidence="1">
    <location>
        <begin position="241"/>
        <end position="248"/>
    </location>
    <ligand>
        <name>ATP</name>
        <dbReference type="ChEBI" id="CHEBI:30616"/>
    </ligand>
</feature>
<feature type="binding site" evidence="1">
    <location>
        <position position="458"/>
    </location>
    <ligand>
        <name>Zn(2+)</name>
        <dbReference type="ChEBI" id="CHEBI:29105"/>
        <label>1</label>
    </ligand>
</feature>
<feature type="binding site" evidence="1">
    <location>
        <position position="461"/>
    </location>
    <ligand>
        <name>Zn(2+)</name>
        <dbReference type="ChEBI" id="CHEBI:29105"/>
        <label>1</label>
    </ligand>
</feature>
<feature type="binding site" evidence="1">
    <location>
        <position position="467"/>
    </location>
    <ligand>
        <name>Zn(2+)</name>
        <dbReference type="ChEBI" id="CHEBI:29105"/>
        <label>2</label>
    </ligand>
</feature>
<feature type="binding site" evidence="1">
    <location>
        <position position="470"/>
    </location>
    <ligand>
        <name>Zn(2+)</name>
        <dbReference type="ChEBI" id="CHEBI:29105"/>
        <label>2</label>
    </ligand>
</feature>
<feature type="binding site" evidence="1">
    <location>
        <position position="485"/>
    </location>
    <ligand>
        <name>Zn(2+)</name>
        <dbReference type="ChEBI" id="CHEBI:29105"/>
        <label>2</label>
    </ligand>
</feature>
<feature type="binding site" evidence="1">
    <location>
        <position position="488"/>
    </location>
    <ligand>
        <name>Zn(2+)</name>
        <dbReference type="ChEBI" id="CHEBI:29105"/>
        <label>2</label>
    </ligand>
</feature>
<feature type="binding site" evidence="1">
    <location>
        <position position="499"/>
    </location>
    <ligand>
        <name>Zn(2+)</name>
        <dbReference type="ChEBI" id="CHEBI:29105"/>
        <label>1</label>
    </ligand>
</feature>
<feature type="binding site" evidence="1">
    <location>
        <position position="502"/>
    </location>
    <ligand>
        <name>Zn(2+)</name>
        <dbReference type="ChEBI" id="CHEBI:29105"/>
        <label>1</label>
    </ligand>
</feature>
<evidence type="ECO:0000255" key="1">
    <source>
        <dbReference type="HAMAP-Rule" id="MF_00983"/>
    </source>
</evidence>
<sequence length="753" mass="84832">MDPTHQPFRLYAEVIVNANINKILDYGIPAELENLVTVGSVVKVPLQRKLTNDKYKIAIVLKIKSSSDFVHVIQPILDISYEGITLPQDLIDLIFWISQYYFCPLGSAVSLFLPTVYAQTHSTKHQNNVFLGQNAERTQEILKTLDNPQQIAVLRKLLKTTKPLTPPELMRKTEVSAKTLDALVKQKFIRIVDSADLEIQDEQLHYFLPDPPTLNQEQLDAVNTISQSLVAEQFQTCLLFGVTGSGKTEVYLQVIRKARALGKSVILLVPEVALTIQTLSFFKMHFGSEVGVLHYKLSDSERTQTWYKASRGLINIIIGPRSAIFCPIQNLGLIIVDEEHDSAYKQSDLPPFYQARDVAVMRGKMTNATVILGSATPSLESYTNALSKKYTLSVLSKRASTSTPTKVFLIDMNLEMEKTRKKPFFSQTVIRSIEQRLEVGEQTIIFFNRRGFHTNVSCSSCKYTLKCPHCDMILTFHKTERILLCHLCNTRLSKPITSCPQCLGTMTLQYRGAGTEKIETLLREFFPTARTIRLDSDTTRFRGSHDALVKQFATGKADILIGTQMIAKGMHFPAVTLSVVLSGDSGLYIPDFRAAEQVFQLITQVTGRSGRSHLPGEVLIQTFLPQNSTISHALAQDFPAFYKEEILGRKVCNYPPFTRLIRCIFLGKCSDYTLKETQRVHTLIKQNLDSQASLMEISPCGHFKVKDLFHYQFLIKTRNILVANKQIQEALAAAKLSSKVRCIVDVDPVTTFF</sequence>
<gene>
    <name evidence="1" type="primary">priA</name>
    <name type="ordered locus">CT_778</name>
</gene>